<evidence type="ECO:0000269" key="1">
    <source>
    </source>
</evidence>
<evidence type="ECO:0000303" key="2">
    <source>
    </source>
</evidence>
<evidence type="ECO:0000305" key="3"/>
<feature type="chain" id="PRO_0000064484" description="Antifungal protein">
    <location>
        <begin position="1"/>
        <end position="30" status="greater than"/>
    </location>
</feature>
<feature type="non-terminal residue" evidence="2">
    <location>
        <position position="30"/>
    </location>
</feature>
<keyword id="KW-0929">Antimicrobial</keyword>
<keyword id="KW-0903">Direct protein sequencing</keyword>
<keyword id="KW-0295">Fungicide</keyword>
<proteinExistence type="evidence at protein level"/>
<sequence>ATFDIQNKXTYTVWAAAWAPSYPGGXKQLD</sequence>
<name>AFP_DIOTE</name>
<protein>
    <recommendedName>
        <fullName>Antifungal protein</fullName>
    </recommendedName>
</protein>
<organism>
    <name type="scientific">Diospyros texana</name>
    <name type="common">Texas persimmon</name>
    <dbReference type="NCBI Taxonomy" id="37488"/>
    <lineage>
        <taxon>Eukaryota</taxon>
        <taxon>Viridiplantae</taxon>
        <taxon>Streptophyta</taxon>
        <taxon>Embryophyta</taxon>
        <taxon>Tracheophyta</taxon>
        <taxon>Spermatophyta</taxon>
        <taxon>Magnoliopsida</taxon>
        <taxon>eudicotyledons</taxon>
        <taxon>Gunneridae</taxon>
        <taxon>Pentapetalae</taxon>
        <taxon>asterids</taxon>
        <taxon>Ericales</taxon>
        <taxon>Ebenaceae</taxon>
        <taxon>Diospyros</taxon>
    </lineage>
</organism>
<comment type="function">
    <text evidence="1">Has antifungal activity against P.infestans.</text>
</comment>
<comment type="tissue specificity">
    <text evidence="1">Expressed in the skin and the flesh but not the seed of the fruit.</text>
</comment>
<comment type="developmental stage">
    <text evidence="1">Overripe fruit.</text>
</comment>
<dbReference type="GO" id="GO:0050832">
    <property type="term" value="P:defense response to fungus"/>
    <property type="evidence" value="ECO:0007669"/>
    <property type="project" value="UniProtKB-KW"/>
</dbReference>
<dbReference type="GO" id="GO:0031640">
    <property type="term" value="P:killing of cells of another organism"/>
    <property type="evidence" value="ECO:0007669"/>
    <property type="project" value="UniProtKB-KW"/>
</dbReference>
<accession>P84061</accession>
<reference evidence="3" key="1">
    <citation type="journal article" date="1994" name="Biochem. Biophys. Res. Commun.">
        <title>Isolation and characterization of a 27-kDa antifungal protein from the fruits of Diospyros texana.</title>
        <authorList>
            <person name="Vu L."/>
            <person name="Huynh Q.K."/>
        </authorList>
    </citation>
    <scope>PROTEIN SEQUENCE</scope>
    <scope>FUNCTION</scope>
    <scope>TISSUE SPECIFICITY</scope>
    <scope>DEVELOPMENTAL STAGE</scope>
    <source>
        <tissue evidence="1">Fruit</tissue>
    </source>
</reference>